<protein>
    <recommendedName>
        <fullName evidence="1">7-cyano-7-deazaguanine synthase</fullName>
        <ecNumber evidence="1">6.3.4.20</ecNumber>
    </recommendedName>
    <alternativeName>
        <fullName evidence="1">7-cyano-7-carbaguanine synthase</fullName>
    </alternativeName>
    <alternativeName>
        <fullName evidence="1">PreQ(0) synthase</fullName>
    </alternativeName>
    <alternativeName>
        <fullName evidence="1">Queuosine biosynthesis protein QueC</fullName>
    </alternativeName>
</protein>
<name>QUEC_CALBD</name>
<organism>
    <name type="scientific">Caldicellulosiruptor bescii (strain ATCC BAA-1888 / DSM 6725 / KCTC 15123 / Z-1320)</name>
    <name type="common">Anaerocellum thermophilum</name>
    <dbReference type="NCBI Taxonomy" id="521460"/>
    <lineage>
        <taxon>Bacteria</taxon>
        <taxon>Bacillati</taxon>
        <taxon>Bacillota</taxon>
        <taxon>Bacillota incertae sedis</taxon>
        <taxon>Caldicellulosiruptorales</taxon>
        <taxon>Caldicellulosiruptoraceae</taxon>
        <taxon>Caldicellulosiruptor</taxon>
    </lineage>
</organism>
<gene>
    <name evidence="1" type="primary">queC</name>
    <name type="ordered locus">Athe_0191</name>
</gene>
<proteinExistence type="inferred from homology"/>
<reference key="1">
    <citation type="submission" date="2009-01" db="EMBL/GenBank/DDBJ databases">
        <title>Complete sequence of chromosome of Caldicellulosiruptor becscii DSM 6725.</title>
        <authorList>
            <person name="Lucas S."/>
            <person name="Copeland A."/>
            <person name="Lapidus A."/>
            <person name="Glavina del Rio T."/>
            <person name="Tice H."/>
            <person name="Bruce D."/>
            <person name="Goodwin L."/>
            <person name="Pitluck S."/>
            <person name="Sims D."/>
            <person name="Meincke L."/>
            <person name="Brettin T."/>
            <person name="Detter J.C."/>
            <person name="Han C."/>
            <person name="Larimer F."/>
            <person name="Land M."/>
            <person name="Hauser L."/>
            <person name="Kyrpides N."/>
            <person name="Ovchinnikova G."/>
            <person name="Kataeva I."/>
            <person name="Adams M.W.W."/>
        </authorList>
    </citation>
    <scope>NUCLEOTIDE SEQUENCE [LARGE SCALE GENOMIC DNA]</scope>
    <source>
        <strain>ATCC BAA-1888 / DSM 6725 / KCTC 15123 / Z-1320</strain>
    </source>
</reference>
<feature type="chain" id="PRO_1000186551" description="7-cyano-7-deazaguanine synthase">
    <location>
        <begin position="1"/>
        <end position="221"/>
    </location>
</feature>
<feature type="binding site" evidence="1">
    <location>
        <begin position="7"/>
        <end position="17"/>
    </location>
    <ligand>
        <name>ATP</name>
        <dbReference type="ChEBI" id="CHEBI:30616"/>
    </ligand>
</feature>
<feature type="binding site" evidence="1">
    <location>
        <position position="183"/>
    </location>
    <ligand>
        <name>Zn(2+)</name>
        <dbReference type="ChEBI" id="CHEBI:29105"/>
    </ligand>
</feature>
<feature type="binding site" evidence="1">
    <location>
        <position position="191"/>
    </location>
    <ligand>
        <name>Zn(2+)</name>
        <dbReference type="ChEBI" id="CHEBI:29105"/>
    </ligand>
</feature>
<feature type="binding site" evidence="1">
    <location>
        <position position="194"/>
    </location>
    <ligand>
        <name>Zn(2+)</name>
        <dbReference type="ChEBI" id="CHEBI:29105"/>
    </ligand>
</feature>
<feature type="binding site" evidence="1">
    <location>
        <position position="197"/>
    </location>
    <ligand>
        <name>Zn(2+)</name>
        <dbReference type="ChEBI" id="CHEBI:29105"/>
    </ligand>
</feature>
<accession>B9MMB0</accession>
<comment type="function">
    <text evidence="1">Catalyzes the ATP-dependent conversion of 7-carboxy-7-deazaguanine (CDG) to 7-cyano-7-deazaguanine (preQ(0)).</text>
</comment>
<comment type="catalytic activity">
    <reaction evidence="1">
        <text>7-carboxy-7-deazaguanine + NH4(+) + ATP = 7-cyano-7-deazaguanine + ADP + phosphate + H2O + H(+)</text>
        <dbReference type="Rhea" id="RHEA:27982"/>
        <dbReference type="ChEBI" id="CHEBI:15377"/>
        <dbReference type="ChEBI" id="CHEBI:15378"/>
        <dbReference type="ChEBI" id="CHEBI:28938"/>
        <dbReference type="ChEBI" id="CHEBI:30616"/>
        <dbReference type="ChEBI" id="CHEBI:43474"/>
        <dbReference type="ChEBI" id="CHEBI:45075"/>
        <dbReference type="ChEBI" id="CHEBI:61036"/>
        <dbReference type="ChEBI" id="CHEBI:456216"/>
        <dbReference type="EC" id="6.3.4.20"/>
    </reaction>
</comment>
<comment type="cofactor">
    <cofactor evidence="1">
        <name>Zn(2+)</name>
        <dbReference type="ChEBI" id="CHEBI:29105"/>
    </cofactor>
    <text evidence="1">Binds 1 zinc ion per subunit.</text>
</comment>
<comment type="pathway">
    <text evidence="1">Purine metabolism; 7-cyano-7-deazaguanine biosynthesis.</text>
</comment>
<comment type="subunit">
    <text evidence="1">Homodimer.</text>
</comment>
<comment type="similarity">
    <text evidence="1">Belongs to the QueC family.</text>
</comment>
<dbReference type="EC" id="6.3.4.20" evidence="1"/>
<dbReference type="EMBL" id="CP001393">
    <property type="protein sequence ID" value="ACM59342.1"/>
    <property type="molecule type" value="Genomic_DNA"/>
</dbReference>
<dbReference type="RefSeq" id="WP_015906813.1">
    <property type="nucleotide sequence ID" value="NC_012034.1"/>
</dbReference>
<dbReference type="SMR" id="B9MMB0"/>
<dbReference type="STRING" id="521460.Athe_0191"/>
<dbReference type="GeneID" id="31771563"/>
<dbReference type="KEGG" id="ate:Athe_0191"/>
<dbReference type="eggNOG" id="COG0603">
    <property type="taxonomic scope" value="Bacteria"/>
</dbReference>
<dbReference type="HOGENOM" id="CLU_081854_1_0_9"/>
<dbReference type="UniPathway" id="UPA00391"/>
<dbReference type="Proteomes" id="UP000007723">
    <property type="component" value="Chromosome"/>
</dbReference>
<dbReference type="GO" id="GO:0005524">
    <property type="term" value="F:ATP binding"/>
    <property type="evidence" value="ECO:0007669"/>
    <property type="project" value="UniProtKB-UniRule"/>
</dbReference>
<dbReference type="GO" id="GO:0016879">
    <property type="term" value="F:ligase activity, forming carbon-nitrogen bonds"/>
    <property type="evidence" value="ECO:0007669"/>
    <property type="project" value="UniProtKB-UniRule"/>
</dbReference>
<dbReference type="GO" id="GO:0008270">
    <property type="term" value="F:zinc ion binding"/>
    <property type="evidence" value="ECO:0007669"/>
    <property type="project" value="UniProtKB-UniRule"/>
</dbReference>
<dbReference type="GO" id="GO:0008616">
    <property type="term" value="P:queuosine biosynthetic process"/>
    <property type="evidence" value="ECO:0007669"/>
    <property type="project" value="UniProtKB-UniRule"/>
</dbReference>
<dbReference type="CDD" id="cd01995">
    <property type="entry name" value="QueC-like"/>
    <property type="match status" value="1"/>
</dbReference>
<dbReference type="Gene3D" id="3.40.50.620">
    <property type="entry name" value="HUPs"/>
    <property type="match status" value="1"/>
</dbReference>
<dbReference type="HAMAP" id="MF_01633">
    <property type="entry name" value="QueC"/>
    <property type="match status" value="1"/>
</dbReference>
<dbReference type="InterPro" id="IPR018317">
    <property type="entry name" value="QueC"/>
</dbReference>
<dbReference type="InterPro" id="IPR014729">
    <property type="entry name" value="Rossmann-like_a/b/a_fold"/>
</dbReference>
<dbReference type="NCBIfam" id="TIGR00364">
    <property type="entry name" value="7-cyano-7-deazaguanine synthase QueC"/>
    <property type="match status" value="1"/>
</dbReference>
<dbReference type="PANTHER" id="PTHR42914">
    <property type="entry name" value="7-CYANO-7-DEAZAGUANINE SYNTHASE"/>
    <property type="match status" value="1"/>
</dbReference>
<dbReference type="PANTHER" id="PTHR42914:SF1">
    <property type="entry name" value="7-CYANO-7-DEAZAGUANINE SYNTHASE"/>
    <property type="match status" value="1"/>
</dbReference>
<dbReference type="Pfam" id="PF06508">
    <property type="entry name" value="QueC"/>
    <property type="match status" value="1"/>
</dbReference>
<dbReference type="PIRSF" id="PIRSF006293">
    <property type="entry name" value="ExsB"/>
    <property type="match status" value="1"/>
</dbReference>
<dbReference type="SUPFAM" id="SSF52402">
    <property type="entry name" value="Adenine nucleotide alpha hydrolases-like"/>
    <property type="match status" value="1"/>
</dbReference>
<keyword id="KW-0067">ATP-binding</keyword>
<keyword id="KW-0436">Ligase</keyword>
<keyword id="KW-0479">Metal-binding</keyword>
<keyword id="KW-0547">Nucleotide-binding</keyword>
<keyword id="KW-0671">Queuosine biosynthesis</keyword>
<keyword id="KW-0862">Zinc</keyword>
<sequence length="221" mass="24769">MRAVVVLSGGMDSTTLLYDVKSQGYEVFAISFLYGQKHSKELEFAKKTCSLLSIPYKIVDISFFAELAPSALTTPDWNVPEGYYTDSTMKQTVVPNRNMVLLSISAAYAISLGAKKLFYGAHAGDHPIYPDCRKEFVEAMKNALYLADYIGLELEAPYVDMKKEDILRRGLELGVNYSLTWSCYKGGQKACGRCGTCTERIEAFKKVGVKDPIEYEIEIDW</sequence>
<evidence type="ECO:0000255" key="1">
    <source>
        <dbReference type="HAMAP-Rule" id="MF_01633"/>
    </source>
</evidence>